<keyword id="KW-0067">ATP-binding</keyword>
<keyword id="KW-0963">Cytoplasm</keyword>
<keyword id="KW-0275">Fatty acid biosynthesis</keyword>
<keyword id="KW-0276">Fatty acid metabolism</keyword>
<keyword id="KW-0444">Lipid biosynthesis</keyword>
<keyword id="KW-0443">Lipid metabolism</keyword>
<keyword id="KW-0479">Metal-binding</keyword>
<keyword id="KW-0547">Nucleotide-binding</keyword>
<keyword id="KW-1185">Reference proteome</keyword>
<keyword id="KW-0808">Transferase</keyword>
<keyword id="KW-0862">Zinc</keyword>
<keyword id="KW-0863">Zinc-finger</keyword>
<name>ACCD_DINSH</name>
<reference key="1">
    <citation type="journal article" date="2010" name="ISME J.">
        <title>The complete genome sequence of the algal symbiont Dinoroseobacter shibae: a hitchhiker's guide to life in the sea.</title>
        <authorList>
            <person name="Wagner-Dobler I."/>
            <person name="Ballhausen B."/>
            <person name="Berger M."/>
            <person name="Brinkhoff T."/>
            <person name="Buchholz I."/>
            <person name="Bunk B."/>
            <person name="Cypionka H."/>
            <person name="Daniel R."/>
            <person name="Drepper T."/>
            <person name="Gerdts G."/>
            <person name="Hahnke S."/>
            <person name="Han C."/>
            <person name="Jahn D."/>
            <person name="Kalhoefer D."/>
            <person name="Kiss H."/>
            <person name="Klenk H.P."/>
            <person name="Kyrpides N."/>
            <person name="Liebl W."/>
            <person name="Liesegang H."/>
            <person name="Meincke L."/>
            <person name="Pati A."/>
            <person name="Petersen J."/>
            <person name="Piekarski T."/>
            <person name="Pommerenke C."/>
            <person name="Pradella S."/>
            <person name="Pukall R."/>
            <person name="Rabus R."/>
            <person name="Stackebrandt E."/>
            <person name="Thole S."/>
            <person name="Thompson L."/>
            <person name="Tielen P."/>
            <person name="Tomasch J."/>
            <person name="von Jan M."/>
            <person name="Wanphrut N."/>
            <person name="Wichels A."/>
            <person name="Zech H."/>
            <person name="Simon M."/>
        </authorList>
    </citation>
    <scope>NUCLEOTIDE SEQUENCE [LARGE SCALE GENOMIC DNA]</scope>
    <source>
        <strain>DSM 16493 / NCIMB 14021 / DFL 12</strain>
    </source>
</reference>
<dbReference type="EC" id="2.1.3.15" evidence="1"/>
<dbReference type="EMBL" id="CP000830">
    <property type="protein sequence ID" value="ABV91880.1"/>
    <property type="molecule type" value="Genomic_DNA"/>
</dbReference>
<dbReference type="RefSeq" id="WP_012176813.1">
    <property type="nucleotide sequence ID" value="NC_009952.1"/>
</dbReference>
<dbReference type="SMR" id="A8LKN7"/>
<dbReference type="STRING" id="398580.Dshi_0131"/>
<dbReference type="KEGG" id="dsh:Dshi_0131"/>
<dbReference type="eggNOG" id="COG0777">
    <property type="taxonomic scope" value="Bacteria"/>
</dbReference>
<dbReference type="HOGENOM" id="CLU_015486_1_0_5"/>
<dbReference type="OrthoDB" id="9772975at2"/>
<dbReference type="UniPathway" id="UPA00655">
    <property type="reaction ID" value="UER00711"/>
</dbReference>
<dbReference type="Proteomes" id="UP000006833">
    <property type="component" value="Chromosome"/>
</dbReference>
<dbReference type="GO" id="GO:0009329">
    <property type="term" value="C:acetate CoA-transferase complex"/>
    <property type="evidence" value="ECO:0007669"/>
    <property type="project" value="TreeGrafter"/>
</dbReference>
<dbReference type="GO" id="GO:0003989">
    <property type="term" value="F:acetyl-CoA carboxylase activity"/>
    <property type="evidence" value="ECO:0007669"/>
    <property type="project" value="InterPro"/>
</dbReference>
<dbReference type="GO" id="GO:0005524">
    <property type="term" value="F:ATP binding"/>
    <property type="evidence" value="ECO:0007669"/>
    <property type="project" value="UniProtKB-KW"/>
</dbReference>
<dbReference type="GO" id="GO:0016743">
    <property type="term" value="F:carboxyl- or carbamoyltransferase activity"/>
    <property type="evidence" value="ECO:0007669"/>
    <property type="project" value="UniProtKB-UniRule"/>
</dbReference>
<dbReference type="GO" id="GO:0008270">
    <property type="term" value="F:zinc ion binding"/>
    <property type="evidence" value="ECO:0007669"/>
    <property type="project" value="UniProtKB-UniRule"/>
</dbReference>
<dbReference type="GO" id="GO:0006633">
    <property type="term" value="P:fatty acid biosynthetic process"/>
    <property type="evidence" value="ECO:0007669"/>
    <property type="project" value="UniProtKB-KW"/>
</dbReference>
<dbReference type="GO" id="GO:2001295">
    <property type="term" value="P:malonyl-CoA biosynthetic process"/>
    <property type="evidence" value="ECO:0007669"/>
    <property type="project" value="UniProtKB-UniRule"/>
</dbReference>
<dbReference type="Gene3D" id="3.90.226.10">
    <property type="entry name" value="2-enoyl-CoA Hydratase, Chain A, domain 1"/>
    <property type="match status" value="1"/>
</dbReference>
<dbReference type="HAMAP" id="MF_01395">
    <property type="entry name" value="AcetylCoA_CT_beta"/>
    <property type="match status" value="1"/>
</dbReference>
<dbReference type="InterPro" id="IPR034733">
    <property type="entry name" value="AcCoA_carboxyl_beta"/>
</dbReference>
<dbReference type="InterPro" id="IPR000438">
    <property type="entry name" value="Acetyl_CoA_COase_Trfase_b_su"/>
</dbReference>
<dbReference type="InterPro" id="IPR029045">
    <property type="entry name" value="ClpP/crotonase-like_dom_sf"/>
</dbReference>
<dbReference type="InterPro" id="IPR011762">
    <property type="entry name" value="COA_CT_N"/>
</dbReference>
<dbReference type="InterPro" id="IPR041010">
    <property type="entry name" value="Znf-ACC"/>
</dbReference>
<dbReference type="NCBIfam" id="TIGR00515">
    <property type="entry name" value="accD"/>
    <property type="match status" value="1"/>
</dbReference>
<dbReference type="PANTHER" id="PTHR42995">
    <property type="entry name" value="ACETYL-COENZYME A CARBOXYLASE CARBOXYL TRANSFERASE SUBUNIT BETA, CHLOROPLASTIC"/>
    <property type="match status" value="1"/>
</dbReference>
<dbReference type="PANTHER" id="PTHR42995:SF5">
    <property type="entry name" value="ACETYL-COENZYME A CARBOXYLASE CARBOXYL TRANSFERASE SUBUNIT BETA, CHLOROPLASTIC"/>
    <property type="match status" value="1"/>
</dbReference>
<dbReference type="Pfam" id="PF01039">
    <property type="entry name" value="Carboxyl_trans"/>
    <property type="match status" value="1"/>
</dbReference>
<dbReference type="Pfam" id="PF17848">
    <property type="entry name" value="Zn_ribbon_ACC"/>
    <property type="match status" value="1"/>
</dbReference>
<dbReference type="PRINTS" id="PR01070">
    <property type="entry name" value="ACCCTRFRASEB"/>
</dbReference>
<dbReference type="SUPFAM" id="SSF52096">
    <property type="entry name" value="ClpP/crotonase"/>
    <property type="match status" value="1"/>
</dbReference>
<dbReference type="PROSITE" id="PS50980">
    <property type="entry name" value="COA_CT_NTER"/>
    <property type="match status" value="1"/>
</dbReference>
<feature type="chain" id="PRO_0000389735" description="Acetyl-coenzyme A carboxylase carboxyl transferase subunit beta">
    <location>
        <begin position="1"/>
        <end position="320"/>
    </location>
</feature>
<feature type="domain" description="CoA carboxyltransferase N-terminal" evidence="2">
    <location>
        <begin position="25"/>
        <end position="294"/>
    </location>
</feature>
<feature type="zinc finger region" description="C4-type" evidence="1">
    <location>
        <begin position="29"/>
        <end position="51"/>
    </location>
</feature>
<feature type="region of interest" description="Disordered" evidence="3">
    <location>
        <begin position="290"/>
        <end position="320"/>
    </location>
</feature>
<feature type="binding site" evidence="1">
    <location>
        <position position="29"/>
    </location>
    <ligand>
        <name>Zn(2+)</name>
        <dbReference type="ChEBI" id="CHEBI:29105"/>
    </ligand>
</feature>
<feature type="binding site" evidence="1">
    <location>
        <position position="32"/>
    </location>
    <ligand>
        <name>Zn(2+)</name>
        <dbReference type="ChEBI" id="CHEBI:29105"/>
    </ligand>
</feature>
<feature type="binding site" evidence="1">
    <location>
        <position position="48"/>
    </location>
    <ligand>
        <name>Zn(2+)</name>
        <dbReference type="ChEBI" id="CHEBI:29105"/>
    </ligand>
</feature>
<feature type="binding site" evidence="1">
    <location>
        <position position="51"/>
    </location>
    <ligand>
        <name>Zn(2+)</name>
        <dbReference type="ChEBI" id="CHEBI:29105"/>
    </ligand>
</feature>
<gene>
    <name evidence="1" type="primary">accD</name>
    <name type="ordered locus">Dshi_0131</name>
</gene>
<organism>
    <name type="scientific">Dinoroseobacter shibae (strain DSM 16493 / NCIMB 14021 / DFL 12)</name>
    <dbReference type="NCBI Taxonomy" id="398580"/>
    <lineage>
        <taxon>Bacteria</taxon>
        <taxon>Pseudomonadati</taxon>
        <taxon>Pseudomonadota</taxon>
        <taxon>Alphaproteobacteria</taxon>
        <taxon>Rhodobacterales</taxon>
        <taxon>Roseobacteraceae</taxon>
        <taxon>Dinoroseobacter</taxon>
    </lineage>
</organism>
<proteinExistence type="inferred from homology"/>
<protein>
    <recommendedName>
        <fullName evidence="1">Acetyl-coenzyme A carboxylase carboxyl transferase subunit beta</fullName>
        <shortName evidence="1">ACCase subunit beta</shortName>
        <shortName evidence="1">Acetyl-CoA carboxylase carboxyltransferase subunit beta</shortName>
        <ecNumber evidence="1">2.1.3.15</ecNumber>
    </recommendedName>
</protein>
<evidence type="ECO:0000255" key="1">
    <source>
        <dbReference type="HAMAP-Rule" id="MF_01395"/>
    </source>
</evidence>
<evidence type="ECO:0000255" key="2">
    <source>
        <dbReference type="PROSITE-ProRule" id="PRU01136"/>
    </source>
</evidence>
<evidence type="ECO:0000256" key="3">
    <source>
        <dbReference type="SAM" id="MobiDB-lite"/>
    </source>
</evidence>
<accession>A8LKN7</accession>
<sequence length="320" mass="34935">MNWISNYVRPTINSLFSRREVPENLWRKCPECGTMLFHRELSDNLFVCISCDHHMAITPRQRFEALFDGGVFSEVKVPAPIADPLQFKDQKKYPERMKSAVKATGEPEAMLVAEGEIGRTPIVAAAQDFSFMGGSMGMYVGNAIIAAAERAVALKRPLILFSAAGGARMQEGILSLMQMPRTTVAVQMLKEAGLPYIVVLTHPTTGGVTASYAMLGDVQIAEPNALICFAGPRVIEQTIREKLPEGFQRAEYLLDHGMLDRVTHRMKLRDELIRITRMLLGLGPAIVGDLPAPDPAPATPEPQKAAPSAPAQDKPGAGRS</sequence>
<comment type="function">
    <text evidence="1">Component of the acetyl coenzyme A carboxylase (ACC) complex. Biotin carboxylase (BC) catalyzes the carboxylation of biotin on its carrier protein (BCCP) and then the CO(2) group is transferred by the transcarboxylase to acetyl-CoA to form malonyl-CoA.</text>
</comment>
<comment type="catalytic activity">
    <reaction evidence="1">
        <text>N(6)-carboxybiotinyl-L-lysyl-[protein] + acetyl-CoA = N(6)-biotinyl-L-lysyl-[protein] + malonyl-CoA</text>
        <dbReference type="Rhea" id="RHEA:54728"/>
        <dbReference type="Rhea" id="RHEA-COMP:10505"/>
        <dbReference type="Rhea" id="RHEA-COMP:10506"/>
        <dbReference type="ChEBI" id="CHEBI:57288"/>
        <dbReference type="ChEBI" id="CHEBI:57384"/>
        <dbReference type="ChEBI" id="CHEBI:83144"/>
        <dbReference type="ChEBI" id="CHEBI:83145"/>
        <dbReference type="EC" id="2.1.3.15"/>
    </reaction>
</comment>
<comment type="cofactor">
    <cofactor evidence="1">
        <name>Zn(2+)</name>
        <dbReference type="ChEBI" id="CHEBI:29105"/>
    </cofactor>
    <text evidence="1">Binds 1 zinc ion per subunit.</text>
</comment>
<comment type="pathway">
    <text evidence="1">Lipid metabolism; malonyl-CoA biosynthesis; malonyl-CoA from acetyl-CoA: step 1/1.</text>
</comment>
<comment type="subunit">
    <text evidence="1">Acetyl-CoA carboxylase is a heterohexamer composed of biotin carboxyl carrier protein (AccB), biotin carboxylase (AccC) and two subunits each of ACCase subunit alpha (AccA) and ACCase subunit beta (AccD).</text>
</comment>
<comment type="subcellular location">
    <subcellularLocation>
        <location evidence="1">Cytoplasm</location>
    </subcellularLocation>
</comment>
<comment type="similarity">
    <text evidence="1">Belongs to the AccD/PCCB family.</text>
</comment>